<sequence>MPFIPHTETDIQDMLAAIGVNDIEQLFDEIPSALRTGPLNLVPEAMSEMEITRLMHRRAAQDHVDLNFIGAGAYEHHIPAAVWQIATRGEFYSAYTPYQAEASQGTLQLVYEYQTMMTGLTGMDVSNASLYDGASALAEAVLMSVRANRKSKSHRVLMPATVNPVYRSVTRAIVHGQGIELVEVPFDPATGRVDPKSLAAFEGQDITALVIPQPNFFGVLEEADALTDWAHAQDAQVIGVVNPVSLALLKPPGEWGGKGADIVCGEGQPLGAPLSSGGPYFGFMCCRKEHVRQMPGRIVGRTLDADGRTGFVLTLQAREQHIRRSKATSNICTNQGLVVTAATIHMALLGPEGLERVAAACHANTHALIERLKPLGVTPAFAGEAFHEIAFRLPRPVRPVLDAMAQQGVLGGYALGDDYSDLGDLLLVCATETKTEADLDRYAEVMKAALA</sequence>
<protein>
    <recommendedName>
        <fullName evidence="1">Probable glycine dehydrogenase (decarboxylating) subunit 1</fullName>
        <ecNumber evidence="1">1.4.4.2</ecNumber>
    </recommendedName>
    <alternativeName>
        <fullName evidence="1">Glycine cleavage system P-protein subunit 1</fullName>
    </alternativeName>
    <alternativeName>
        <fullName evidence="1">Glycine decarboxylase subunit 1</fullName>
    </alternativeName>
    <alternativeName>
        <fullName evidence="1">Glycine dehydrogenase (aminomethyl-transferring) subunit 1</fullName>
    </alternativeName>
</protein>
<name>GCSPA_THISH</name>
<keyword id="KW-0560">Oxidoreductase</keyword>
<keyword id="KW-1185">Reference proteome</keyword>
<evidence type="ECO:0000255" key="1">
    <source>
        <dbReference type="HAMAP-Rule" id="MF_00712"/>
    </source>
</evidence>
<comment type="function">
    <text evidence="1">The glycine cleavage system catalyzes the degradation of glycine. The P protein binds the alpha-amino group of glycine through its pyridoxal phosphate cofactor; CO(2) is released and the remaining methylamine moiety is then transferred to the lipoamide cofactor of the H protein.</text>
</comment>
<comment type="catalytic activity">
    <reaction evidence="1">
        <text>N(6)-[(R)-lipoyl]-L-lysyl-[glycine-cleavage complex H protein] + glycine + H(+) = N(6)-[(R)-S(8)-aminomethyldihydrolipoyl]-L-lysyl-[glycine-cleavage complex H protein] + CO2</text>
        <dbReference type="Rhea" id="RHEA:24304"/>
        <dbReference type="Rhea" id="RHEA-COMP:10494"/>
        <dbReference type="Rhea" id="RHEA-COMP:10495"/>
        <dbReference type="ChEBI" id="CHEBI:15378"/>
        <dbReference type="ChEBI" id="CHEBI:16526"/>
        <dbReference type="ChEBI" id="CHEBI:57305"/>
        <dbReference type="ChEBI" id="CHEBI:83099"/>
        <dbReference type="ChEBI" id="CHEBI:83143"/>
        <dbReference type="EC" id="1.4.4.2"/>
    </reaction>
</comment>
<comment type="subunit">
    <text evidence="1">The glycine cleavage system is composed of four proteins: P, T, L and H. In this organism, the P 'protein' is a heterodimer of two subunits.</text>
</comment>
<comment type="similarity">
    <text evidence="1">Belongs to the GcvP family. N-terminal subunit subfamily.</text>
</comment>
<proteinExistence type="inferred from homology"/>
<dbReference type="EC" id="1.4.4.2" evidence="1"/>
<dbReference type="EMBL" id="CP001339">
    <property type="protein sequence ID" value="ACL73831.1"/>
    <property type="molecule type" value="Genomic_DNA"/>
</dbReference>
<dbReference type="RefSeq" id="WP_012639306.1">
    <property type="nucleotide sequence ID" value="NC_011901.1"/>
</dbReference>
<dbReference type="SMR" id="B8GN16"/>
<dbReference type="STRING" id="396588.Tgr7_2757"/>
<dbReference type="KEGG" id="tgr:Tgr7_2757"/>
<dbReference type="eggNOG" id="COG0403">
    <property type="taxonomic scope" value="Bacteria"/>
</dbReference>
<dbReference type="HOGENOM" id="CLU_004620_0_2_6"/>
<dbReference type="OrthoDB" id="9801272at2"/>
<dbReference type="Proteomes" id="UP000002383">
    <property type="component" value="Chromosome"/>
</dbReference>
<dbReference type="GO" id="GO:0004375">
    <property type="term" value="F:glycine dehydrogenase (decarboxylating) activity"/>
    <property type="evidence" value="ECO:0007669"/>
    <property type="project" value="UniProtKB-EC"/>
</dbReference>
<dbReference type="GO" id="GO:0019464">
    <property type="term" value="P:glycine decarboxylation via glycine cleavage system"/>
    <property type="evidence" value="ECO:0007669"/>
    <property type="project" value="UniProtKB-UniRule"/>
</dbReference>
<dbReference type="GO" id="GO:0009116">
    <property type="term" value="P:nucleoside metabolic process"/>
    <property type="evidence" value="ECO:0007669"/>
    <property type="project" value="InterPro"/>
</dbReference>
<dbReference type="CDD" id="cd00613">
    <property type="entry name" value="GDC-P"/>
    <property type="match status" value="1"/>
</dbReference>
<dbReference type="Gene3D" id="3.90.1150.10">
    <property type="entry name" value="Aspartate Aminotransferase, domain 1"/>
    <property type="match status" value="1"/>
</dbReference>
<dbReference type="Gene3D" id="3.40.640.10">
    <property type="entry name" value="Type I PLP-dependent aspartate aminotransferase-like (Major domain)"/>
    <property type="match status" value="1"/>
</dbReference>
<dbReference type="HAMAP" id="MF_00712">
    <property type="entry name" value="GcvPA"/>
    <property type="match status" value="1"/>
</dbReference>
<dbReference type="InterPro" id="IPR023010">
    <property type="entry name" value="GcvPA"/>
</dbReference>
<dbReference type="InterPro" id="IPR049315">
    <property type="entry name" value="GDC-P_N"/>
</dbReference>
<dbReference type="InterPro" id="IPR020581">
    <property type="entry name" value="GDC_P"/>
</dbReference>
<dbReference type="InterPro" id="IPR015424">
    <property type="entry name" value="PyrdxlP-dep_Trfase"/>
</dbReference>
<dbReference type="InterPro" id="IPR015421">
    <property type="entry name" value="PyrdxlP-dep_Trfase_major"/>
</dbReference>
<dbReference type="InterPro" id="IPR015422">
    <property type="entry name" value="PyrdxlP-dep_Trfase_small"/>
</dbReference>
<dbReference type="NCBIfam" id="NF001696">
    <property type="entry name" value="PRK00451.1"/>
    <property type="match status" value="1"/>
</dbReference>
<dbReference type="PANTHER" id="PTHR42806">
    <property type="entry name" value="GLYCINE CLEAVAGE SYSTEM P-PROTEIN"/>
    <property type="match status" value="1"/>
</dbReference>
<dbReference type="PANTHER" id="PTHR42806:SF1">
    <property type="entry name" value="GLYCINE DEHYDROGENASE (DECARBOXYLATING)"/>
    <property type="match status" value="1"/>
</dbReference>
<dbReference type="Pfam" id="PF02347">
    <property type="entry name" value="GDC-P"/>
    <property type="match status" value="1"/>
</dbReference>
<dbReference type="PIRSF" id="PIRSF006815">
    <property type="entry name" value="GcvPA"/>
    <property type="match status" value="1"/>
</dbReference>
<dbReference type="SUPFAM" id="SSF53383">
    <property type="entry name" value="PLP-dependent transferases"/>
    <property type="match status" value="1"/>
</dbReference>
<accession>B8GN16</accession>
<organism>
    <name type="scientific">Thioalkalivibrio sulfidiphilus (strain HL-EbGR7)</name>
    <dbReference type="NCBI Taxonomy" id="396588"/>
    <lineage>
        <taxon>Bacteria</taxon>
        <taxon>Pseudomonadati</taxon>
        <taxon>Pseudomonadota</taxon>
        <taxon>Gammaproteobacteria</taxon>
        <taxon>Chromatiales</taxon>
        <taxon>Ectothiorhodospiraceae</taxon>
        <taxon>Thioalkalivibrio</taxon>
    </lineage>
</organism>
<reference key="1">
    <citation type="journal article" date="2011" name="Stand. Genomic Sci.">
        <title>Complete genome sequence of 'Thioalkalivibrio sulfidophilus' HL-EbGr7.</title>
        <authorList>
            <person name="Muyzer G."/>
            <person name="Sorokin D.Y."/>
            <person name="Mavromatis K."/>
            <person name="Lapidus A."/>
            <person name="Clum A."/>
            <person name="Ivanova N."/>
            <person name="Pati A."/>
            <person name="d'Haeseleer P."/>
            <person name="Woyke T."/>
            <person name="Kyrpides N.C."/>
        </authorList>
    </citation>
    <scope>NUCLEOTIDE SEQUENCE [LARGE SCALE GENOMIC DNA]</scope>
    <source>
        <strain>HL-EbGR7</strain>
    </source>
</reference>
<gene>
    <name evidence="1" type="primary">gcvPA</name>
    <name type="ordered locus">Tgr7_2757</name>
</gene>
<feature type="chain" id="PRO_1000147993" description="Probable glycine dehydrogenase (decarboxylating) subunit 1">
    <location>
        <begin position="1"/>
        <end position="451"/>
    </location>
</feature>